<keyword id="KW-0963">Cytoplasm</keyword>
<keyword id="KW-0276">Fatty acid metabolism</keyword>
<keyword id="KW-0413">Isomerase</keyword>
<keyword id="KW-0442">Lipid degradation</keyword>
<keyword id="KW-0443">Lipid metabolism</keyword>
<keyword id="KW-0456">Lyase</keyword>
<keyword id="KW-0511">Multifunctional enzyme</keyword>
<keyword id="KW-0520">NAD</keyword>
<keyword id="KW-0560">Oxidoreductase</keyword>
<keyword id="KW-1185">Reference proteome</keyword>
<reference key="1">
    <citation type="journal article" date="2004" name="Proc. Natl. Acad. Sci. U.S.A.">
        <title>Genome sequence of the enterobacterial phytopathogen Erwinia carotovora subsp. atroseptica and characterization of virulence factors.</title>
        <authorList>
            <person name="Bell K.S."/>
            <person name="Sebaihia M."/>
            <person name="Pritchard L."/>
            <person name="Holden M.T.G."/>
            <person name="Hyman L.J."/>
            <person name="Holeva M.C."/>
            <person name="Thomson N.R."/>
            <person name="Bentley S.D."/>
            <person name="Churcher L.J.C."/>
            <person name="Mungall K."/>
            <person name="Atkin R."/>
            <person name="Bason N."/>
            <person name="Brooks K."/>
            <person name="Chillingworth T."/>
            <person name="Clark K."/>
            <person name="Doggett J."/>
            <person name="Fraser A."/>
            <person name="Hance Z."/>
            <person name="Hauser H."/>
            <person name="Jagels K."/>
            <person name="Moule S."/>
            <person name="Norbertczak H."/>
            <person name="Ormond D."/>
            <person name="Price C."/>
            <person name="Quail M.A."/>
            <person name="Sanders M."/>
            <person name="Walker D."/>
            <person name="Whitehead S."/>
            <person name="Salmond G.P.C."/>
            <person name="Birch P.R.J."/>
            <person name="Parkhill J."/>
            <person name="Toth I.K."/>
        </authorList>
    </citation>
    <scope>NUCLEOTIDE SEQUENCE [LARGE SCALE GENOMIC DNA]</scope>
    <source>
        <strain>SCRI 1043 / ATCC BAA-672</strain>
    </source>
</reference>
<evidence type="ECO:0000255" key="1">
    <source>
        <dbReference type="HAMAP-Rule" id="MF_01617"/>
    </source>
</evidence>
<sequence length="731" mass="80047">MNDQQPFSVTASPTTEKTSAFSLTIRPDNIGVISIDVPGERVNTLKSEFAEQILSVFELARQHATLRGLIFISAKPDSFIAGADITMLNKCSSAEQAENLAKQGQETFDQIAALPFPVVAAIHGACLGGGLELALACDYRVCSLDEKTVLGLPEVQLGLLPGSGGTQRLPRLIGLDSALDLILTGRHLRAGQALRQGLVDEAVPHDILLDTAVEILKKGKRKAVPLGWRSRLLNSPGIRHLLFKMVKRKTRAKTHGNYPATEKIIQVVRRGIEKGREEGYRHEARAFGKLVMTPESAALRHLFFATNALKKTSGAASEAKPIHRVGILGGGLMGGGIASVTATRGQLPVRIKDINEQGINHALKYNWQLLTKRVQSKRMKPTERQRLMTLISGSTDYRGFEHADIVIEAVFEDLALKRQMITEIEDHAAPHTIFASNTSSLPIHQIAEGARRPQLVVGLHYFSPVDKMPLVEVIPHAHTSAETVATTVALARKQGKTAIVVGDSAGFYVNRILAPYINEAAYCLLEGEPIESIDYALVRFGFPVGPLALLDEVGIDVATKIVPVLSEELGDRFTSPPAFDAILKDGRKGRKNGKGFYRYNKTRRFWHSGKEVDSSVYPLLDVTPKAHIDPALISQRAVMMMLNEAARCLDEGVIQCARDGDIGAVFGIGFPPFLGGPFHYMDRLGMETVVKTLLVLQQQYGDRFAPCERLLTMREGQRTFYPPADKDNSIS</sequence>
<comment type="function">
    <text evidence="1">Catalyzes the formation of a hydroxyacyl-CoA by addition of water on enoyl-CoA. Also exhibits 3-hydroxyacyl-CoA epimerase and 3-hydroxyacyl-CoA dehydrogenase activities.</text>
</comment>
<comment type="catalytic activity">
    <reaction evidence="1">
        <text>a (3S)-3-hydroxyacyl-CoA = a (2E)-enoyl-CoA + H2O</text>
        <dbReference type="Rhea" id="RHEA:16105"/>
        <dbReference type="ChEBI" id="CHEBI:15377"/>
        <dbReference type="ChEBI" id="CHEBI:57318"/>
        <dbReference type="ChEBI" id="CHEBI:58856"/>
        <dbReference type="EC" id="4.2.1.17"/>
    </reaction>
</comment>
<comment type="catalytic activity">
    <reaction evidence="1">
        <text>a 4-saturated-(3S)-3-hydroxyacyl-CoA = a (3E)-enoyl-CoA + H2O</text>
        <dbReference type="Rhea" id="RHEA:20724"/>
        <dbReference type="ChEBI" id="CHEBI:15377"/>
        <dbReference type="ChEBI" id="CHEBI:58521"/>
        <dbReference type="ChEBI" id="CHEBI:137480"/>
        <dbReference type="EC" id="4.2.1.17"/>
    </reaction>
</comment>
<comment type="catalytic activity">
    <reaction evidence="1">
        <text>a (3S)-3-hydroxyacyl-CoA + NAD(+) = a 3-oxoacyl-CoA + NADH + H(+)</text>
        <dbReference type="Rhea" id="RHEA:22432"/>
        <dbReference type="ChEBI" id="CHEBI:15378"/>
        <dbReference type="ChEBI" id="CHEBI:57318"/>
        <dbReference type="ChEBI" id="CHEBI:57540"/>
        <dbReference type="ChEBI" id="CHEBI:57945"/>
        <dbReference type="ChEBI" id="CHEBI:90726"/>
        <dbReference type="EC" id="1.1.1.35"/>
    </reaction>
</comment>
<comment type="catalytic activity">
    <reaction evidence="1">
        <text>(3S)-3-hydroxybutanoyl-CoA = (3R)-3-hydroxybutanoyl-CoA</text>
        <dbReference type="Rhea" id="RHEA:21760"/>
        <dbReference type="ChEBI" id="CHEBI:57315"/>
        <dbReference type="ChEBI" id="CHEBI:57316"/>
        <dbReference type="EC" id="5.1.2.3"/>
    </reaction>
</comment>
<comment type="pathway">
    <text evidence="1">Lipid metabolism; fatty acid beta-oxidation.</text>
</comment>
<comment type="subunit">
    <text evidence="1">Heterotetramer of two alpha chains (FadJ) and two beta chains (FadI).</text>
</comment>
<comment type="subcellular location">
    <subcellularLocation>
        <location evidence="1">Cytoplasm</location>
    </subcellularLocation>
</comment>
<comment type="similarity">
    <text evidence="1">In the N-terminal section; belongs to the enoyl-CoA hydratase/isomerase family.</text>
</comment>
<comment type="similarity">
    <text evidence="1">In the central section; belongs to the 3-hydroxyacyl-CoA dehydrogenase family.</text>
</comment>
<proteinExistence type="inferred from homology"/>
<gene>
    <name evidence="1" type="primary">fadJ</name>
    <name type="ordered locus">ECA3078</name>
</gene>
<accession>Q6D2L7</accession>
<dbReference type="EC" id="4.2.1.17" evidence="1"/>
<dbReference type="EC" id="5.1.2.3" evidence="1"/>
<dbReference type="EC" id="1.1.1.35" evidence="1"/>
<dbReference type="EMBL" id="BX950851">
    <property type="protein sequence ID" value="CAG75977.1"/>
    <property type="molecule type" value="Genomic_DNA"/>
</dbReference>
<dbReference type="RefSeq" id="WP_011094602.1">
    <property type="nucleotide sequence ID" value="NC_004547.2"/>
</dbReference>
<dbReference type="SMR" id="Q6D2L7"/>
<dbReference type="STRING" id="218491.ECA3078"/>
<dbReference type="KEGG" id="eca:ECA3078"/>
<dbReference type="PATRIC" id="fig|218491.5.peg.3111"/>
<dbReference type="eggNOG" id="COG1024">
    <property type="taxonomic scope" value="Bacteria"/>
</dbReference>
<dbReference type="eggNOG" id="COG1250">
    <property type="taxonomic scope" value="Bacteria"/>
</dbReference>
<dbReference type="HOGENOM" id="CLU_009834_16_1_6"/>
<dbReference type="OrthoDB" id="5389341at2"/>
<dbReference type="UniPathway" id="UPA00659"/>
<dbReference type="Proteomes" id="UP000007966">
    <property type="component" value="Chromosome"/>
</dbReference>
<dbReference type="GO" id="GO:0005737">
    <property type="term" value="C:cytoplasm"/>
    <property type="evidence" value="ECO:0007669"/>
    <property type="project" value="UniProtKB-SubCell"/>
</dbReference>
<dbReference type="GO" id="GO:0008692">
    <property type="term" value="F:3-hydroxybutyryl-CoA epimerase activity"/>
    <property type="evidence" value="ECO:0007669"/>
    <property type="project" value="UniProtKB-UniRule"/>
</dbReference>
<dbReference type="GO" id="GO:0004300">
    <property type="term" value="F:enoyl-CoA hydratase activity"/>
    <property type="evidence" value="ECO:0007669"/>
    <property type="project" value="UniProtKB-UniRule"/>
</dbReference>
<dbReference type="GO" id="GO:0016509">
    <property type="term" value="F:long-chain-3-hydroxyacyl-CoA dehydrogenase activity"/>
    <property type="evidence" value="ECO:0007669"/>
    <property type="project" value="TreeGrafter"/>
</dbReference>
<dbReference type="GO" id="GO:0070403">
    <property type="term" value="F:NAD+ binding"/>
    <property type="evidence" value="ECO:0007669"/>
    <property type="project" value="InterPro"/>
</dbReference>
<dbReference type="GO" id="GO:0006635">
    <property type="term" value="P:fatty acid beta-oxidation"/>
    <property type="evidence" value="ECO:0007669"/>
    <property type="project" value="UniProtKB-UniRule"/>
</dbReference>
<dbReference type="CDD" id="cd06558">
    <property type="entry name" value="crotonase-like"/>
    <property type="match status" value="1"/>
</dbReference>
<dbReference type="FunFam" id="3.90.226.10:FF:000011">
    <property type="entry name" value="Fatty acid oxidation complex subunit alpha"/>
    <property type="match status" value="1"/>
</dbReference>
<dbReference type="FunFam" id="3.40.50.720:FF:000009">
    <property type="entry name" value="Fatty oxidation complex, alpha subunit"/>
    <property type="match status" value="1"/>
</dbReference>
<dbReference type="Gene3D" id="1.10.1040.50">
    <property type="match status" value="1"/>
</dbReference>
<dbReference type="Gene3D" id="3.90.226.10">
    <property type="entry name" value="2-enoyl-CoA Hydratase, Chain A, domain 1"/>
    <property type="match status" value="1"/>
</dbReference>
<dbReference type="Gene3D" id="3.40.50.720">
    <property type="entry name" value="NAD(P)-binding Rossmann-like Domain"/>
    <property type="match status" value="1"/>
</dbReference>
<dbReference type="HAMAP" id="MF_01617">
    <property type="entry name" value="FadJ"/>
    <property type="match status" value="1"/>
</dbReference>
<dbReference type="InterPro" id="IPR006180">
    <property type="entry name" value="3-OHacyl-CoA_DH_CS"/>
</dbReference>
<dbReference type="InterPro" id="IPR006176">
    <property type="entry name" value="3-OHacyl-CoA_DH_NAD-bd"/>
</dbReference>
<dbReference type="InterPro" id="IPR006108">
    <property type="entry name" value="3HC_DH_C"/>
</dbReference>
<dbReference type="InterPro" id="IPR008927">
    <property type="entry name" value="6-PGluconate_DH-like_C_sf"/>
</dbReference>
<dbReference type="InterPro" id="IPR029045">
    <property type="entry name" value="ClpP/crotonase-like_dom_sf"/>
</dbReference>
<dbReference type="InterPro" id="IPR018376">
    <property type="entry name" value="Enoyl-CoA_hyd/isom_CS"/>
</dbReference>
<dbReference type="InterPro" id="IPR001753">
    <property type="entry name" value="Enoyl-CoA_hydra/iso"/>
</dbReference>
<dbReference type="InterPro" id="IPR050136">
    <property type="entry name" value="FA_oxidation_alpha_subunit"/>
</dbReference>
<dbReference type="InterPro" id="IPR012802">
    <property type="entry name" value="FadJ"/>
</dbReference>
<dbReference type="InterPro" id="IPR036291">
    <property type="entry name" value="NAD(P)-bd_dom_sf"/>
</dbReference>
<dbReference type="NCBIfam" id="TIGR02440">
    <property type="entry name" value="FadJ"/>
    <property type="match status" value="1"/>
</dbReference>
<dbReference type="NCBIfam" id="NF008363">
    <property type="entry name" value="PRK11154.1"/>
    <property type="match status" value="1"/>
</dbReference>
<dbReference type="PANTHER" id="PTHR43612">
    <property type="entry name" value="TRIFUNCTIONAL ENZYME SUBUNIT ALPHA"/>
    <property type="match status" value="1"/>
</dbReference>
<dbReference type="PANTHER" id="PTHR43612:SF3">
    <property type="entry name" value="TRIFUNCTIONAL ENZYME SUBUNIT ALPHA, MITOCHONDRIAL"/>
    <property type="match status" value="1"/>
</dbReference>
<dbReference type="Pfam" id="PF00725">
    <property type="entry name" value="3HCDH"/>
    <property type="match status" value="2"/>
</dbReference>
<dbReference type="Pfam" id="PF02737">
    <property type="entry name" value="3HCDH_N"/>
    <property type="match status" value="1"/>
</dbReference>
<dbReference type="Pfam" id="PF00378">
    <property type="entry name" value="ECH_1"/>
    <property type="match status" value="1"/>
</dbReference>
<dbReference type="SUPFAM" id="SSF48179">
    <property type="entry name" value="6-phosphogluconate dehydrogenase C-terminal domain-like"/>
    <property type="match status" value="2"/>
</dbReference>
<dbReference type="SUPFAM" id="SSF52096">
    <property type="entry name" value="ClpP/crotonase"/>
    <property type="match status" value="1"/>
</dbReference>
<dbReference type="SUPFAM" id="SSF51735">
    <property type="entry name" value="NAD(P)-binding Rossmann-fold domains"/>
    <property type="match status" value="1"/>
</dbReference>
<dbReference type="PROSITE" id="PS00067">
    <property type="entry name" value="3HCDH"/>
    <property type="match status" value="1"/>
</dbReference>
<dbReference type="PROSITE" id="PS00166">
    <property type="entry name" value="ENOYL_COA_HYDRATASE"/>
    <property type="match status" value="1"/>
</dbReference>
<name>FADJ_PECAS</name>
<feature type="chain" id="PRO_0000109297" description="Fatty acid oxidation complex subunit alpha">
    <location>
        <begin position="1"/>
        <end position="731"/>
    </location>
</feature>
<feature type="region of interest" description="Enoyl-CoA hydratase" evidence="1">
    <location>
        <begin position="15"/>
        <end position="204"/>
    </location>
</feature>
<feature type="region of interest" description="3-hydroxyacyl-CoA dehydrogenase" evidence="1">
    <location>
        <begin position="320"/>
        <end position="729"/>
    </location>
</feature>
<feature type="site" description="Important for catalytic activity" evidence="1">
    <location>
        <position position="132"/>
    </location>
</feature>
<feature type="site" description="Important for catalytic activity" evidence="1">
    <location>
        <position position="154"/>
    </location>
</feature>
<protein>
    <recommendedName>
        <fullName evidence="1">Fatty acid oxidation complex subunit alpha</fullName>
    </recommendedName>
    <domain>
        <recommendedName>
            <fullName evidence="1">Enoyl-CoA hydratase/3-hydroxybutyryl-CoA epimerase</fullName>
            <ecNumber evidence="1">4.2.1.17</ecNumber>
            <ecNumber evidence="1">5.1.2.3</ecNumber>
        </recommendedName>
    </domain>
    <domain>
        <recommendedName>
            <fullName evidence="1">3-hydroxyacyl-CoA dehydrogenase</fullName>
            <ecNumber evidence="1">1.1.1.35</ecNumber>
        </recommendedName>
    </domain>
</protein>
<organism>
    <name type="scientific">Pectobacterium atrosepticum (strain SCRI 1043 / ATCC BAA-672)</name>
    <name type="common">Erwinia carotovora subsp. atroseptica</name>
    <dbReference type="NCBI Taxonomy" id="218491"/>
    <lineage>
        <taxon>Bacteria</taxon>
        <taxon>Pseudomonadati</taxon>
        <taxon>Pseudomonadota</taxon>
        <taxon>Gammaproteobacteria</taxon>
        <taxon>Enterobacterales</taxon>
        <taxon>Pectobacteriaceae</taxon>
        <taxon>Pectobacterium</taxon>
    </lineage>
</organism>